<gene>
    <name evidence="1" type="primary">rplX</name>
    <name type="ordered locus">TWT_543</name>
</gene>
<evidence type="ECO:0000255" key="1">
    <source>
        <dbReference type="HAMAP-Rule" id="MF_01326"/>
    </source>
</evidence>
<evidence type="ECO:0000256" key="2">
    <source>
        <dbReference type="SAM" id="MobiDB-lite"/>
    </source>
</evidence>
<evidence type="ECO:0000305" key="3"/>
<keyword id="KW-1185">Reference proteome</keyword>
<keyword id="KW-0687">Ribonucleoprotein</keyword>
<keyword id="KW-0689">Ribosomal protein</keyword>
<keyword id="KW-0694">RNA-binding</keyword>
<keyword id="KW-0699">rRNA-binding</keyword>
<feature type="chain" id="PRO_0000130746" description="Large ribosomal subunit protein uL24">
    <location>
        <begin position="1"/>
        <end position="113"/>
    </location>
</feature>
<feature type="region of interest" description="Disordered" evidence="2">
    <location>
        <begin position="48"/>
        <end position="70"/>
    </location>
</feature>
<accession>Q83FZ7</accession>
<dbReference type="EMBL" id="AE014184">
    <property type="protein sequence ID" value="AAO44640.1"/>
    <property type="molecule type" value="Genomic_DNA"/>
</dbReference>
<dbReference type="RefSeq" id="WP_011096176.1">
    <property type="nucleotide sequence ID" value="NC_004572.3"/>
</dbReference>
<dbReference type="SMR" id="Q83FZ7"/>
<dbReference type="STRING" id="203267.TWT_543"/>
<dbReference type="GeneID" id="67387994"/>
<dbReference type="KEGG" id="twh:TWT_543"/>
<dbReference type="eggNOG" id="COG0198">
    <property type="taxonomic scope" value="Bacteria"/>
</dbReference>
<dbReference type="HOGENOM" id="CLU_093315_2_0_11"/>
<dbReference type="OrthoDB" id="9807419at2"/>
<dbReference type="Proteomes" id="UP000002200">
    <property type="component" value="Chromosome"/>
</dbReference>
<dbReference type="GO" id="GO:1990904">
    <property type="term" value="C:ribonucleoprotein complex"/>
    <property type="evidence" value="ECO:0007669"/>
    <property type="project" value="UniProtKB-KW"/>
</dbReference>
<dbReference type="GO" id="GO:0005840">
    <property type="term" value="C:ribosome"/>
    <property type="evidence" value="ECO:0007669"/>
    <property type="project" value="UniProtKB-KW"/>
</dbReference>
<dbReference type="GO" id="GO:0019843">
    <property type="term" value="F:rRNA binding"/>
    <property type="evidence" value="ECO:0007669"/>
    <property type="project" value="UniProtKB-UniRule"/>
</dbReference>
<dbReference type="GO" id="GO:0003735">
    <property type="term" value="F:structural constituent of ribosome"/>
    <property type="evidence" value="ECO:0007669"/>
    <property type="project" value="InterPro"/>
</dbReference>
<dbReference type="GO" id="GO:0006412">
    <property type="term" value="P:translation"/>
    <property type="evidence" value="ECO:0007669"/>
    <property type="project" value="UniProtKB-UniRule"/>
</dbReference>
<dbReference type="CDD" id="cd06089">
    <property type="entry name" value="KOW_RPL26"/>
    <property type="match status" value="1"/>
</dbReference>
<dbReference type="Gene3D" id="2.30.30.30">
    <property type="match status" value="1"/>
</dbReference>
<dbReference type="HAMAP" id="MF_01326_B">
    <property type="entry name" value="Ribosomal_uL24_B"/>
    <property type="match status" value="1"/>
</dbReference>
<dbReference type="InterPro" id="IPR014722">
    <property type="entry name" value="Rib_uL2_dom2"/>
</dbReference>
<dbReference type="InterPro" id="IPR003256">
    <property type="entry name" value="Ribosomal_uL24"/>
</dbReference>
<dbReference type="InterPro" id="IPR041988">
    <property type="entry name" value="Ribosomal_uL24_KOW"/>
</dbReference>
<dbReference type="InterPro" id="IPR008991">
    <property type="entry name" value="Translation_prot_SH3-like_sf"/>
</dbReference>
<dbReference type="NCBIfam" id="TIGR01079">
    <property type="entry name" value="rplX_bact"/>
    <property type="match status" value="1"/>
</dbReference>
<dbReference type="PANTHER" id="PTHR12903">
    <property type="entry name" value="MITOCHONDRIAL RIBOSOMAL PROTEIN L24"/>
    <property type="match status" value="1"/>
</dbReference>
<dbReference type="Pfam" id="PF17136">
    <property type="entry name" value="ribosomal_L24"/>
    <property type="match status" value="1"/>
</dbReference>
<dbReference type="SUPFAM" id="SSF50104">
    <property type="entry name" value="Translation proteins SH3-like domain"/>
    <property type="match status" value="1"/>
</dbReference>
<organism>
    <name type="scientific">Tropheryma whipplei (strain Twist)</name>
    <name type="common">Whipple's bacillus</name>
    <dbReference type="NCBI Taxonomy" id="203267"/>
    <lineage>
        <taxon>Bacteria</taxon>
        <taxon>Bacillati</taxon>
        <taxon>Actinomycetota</taxon>
        <taxon>Actinomycetes</taxon>
        <taxon>Micrococcales</taxon>
        <taxon>Tropherymataceae</taxon>
        <taxon>Tropheryma</taxon>
    </lineage>
</organism>
<proteinExistence type="inferred from homology"/>
<sequence length="113" mass="12129">MSVKIRKGDLVQVITGSKTGGKKGKQGRVLAVSGDRVWVEGVNLTTRHRKRVTNDKGTSSGGLEKRESPMHISNVALVDPETGAPTKVGFLVKTSGDKTVRVRFAKKSGKELT</sequence>
<comment type="function">
    <text evidence="1">One of two assembly initiator proteins, it binds directly to the 5'-end of the 23S rRNA, where it nucleates assembly of the 50S subunit.</text>
</comment>
<comment type="function">
    <text evidence="1">One of the proteins that surrounds the polypeptide exit tunnel on the outside of the subunit.</text>
</comment>
<comment type="subunit">
    <text evidence="1">Part of the 50S ribosomal subunit.</text>
</comment>
<comment type="similarity">
    <text evidence="1">Belongs to the universal ribosomal protein uL24 family.</text>
</comment>
<reference key="1">
    <citation type="journal article" date="2003" name="Genome Res.">
        <title>Tropheryma whipplei twist: a human pathogenic Actinobacteria with a reduced genome.</title>
        <authorList>
            <person name="Raoult D."/>
            <person name="Ogata H."/>
            <person name="Audic S."/>
            <person name="Robert C."/>
            <person name="Suhre K."/>
            <person name="Drancourt M."/>
            <person name="Claverie J.-M."/>
        </authorList>
    </citation>
    <scope>NUCLEOTIDE SEQUENCE [LARGE SCALE GENOMIC DNA]</scope>
    <source>
        <strain>Twist</strain>
    </source>
</reference>
<name>RL24_TROWT</name>
<protein>
    <recommendedName>
        <fullName evidence="1">Large ribosomal subunit protein uL24</fullName>
    </recommendedName>
    <alternativeName>
        <fullName evidence="3">50S ribosomal protein L24</fullName>
    </alternativeName>
</protein>